<reference key="1">
    <citation type="submission" date="2008-01" db="EMBL/GenBank/DDBJ databases">
        <title>Complete sequence of Thermoanaerobacter pseudethanolicus 39E.</title>
        <authorList>
            <person name="Copeland A."/>
            <person name="Lucas S."/>
            <person name="Lapidus A."/>
            <person name="Barry K."/>
            <person name="Glavina del Rio T."/>
            <person name="Dalin E."/>
            <person name="Tice H."/>
            <person name="Pitluck S."/>
            <person name="Bruce D."/>
            <person name="Goodwin L."/>
            <person name="Saunders E."/>
            <person name="Brettin T."/>
            <person name="Detter J.C."/>
            <person name="Han C."/>
            <person name="Schmutz J."/>
            <person name="Larimer F."/>
            <person name="Land M."/>
            <person name="Hauser L."/>
            <person name="Kyrpides N."/>
            <person name="Lykidis A."/>
            <person name="Hemme C."/>
            <person name="Fields M.W."/>
            <person name="He Z."/>
            <person name="Zhou J."/>
            <person name="Richardson P."/>
        </authorList>
    </citation>
    <scope>NUCLEOTIDE SEQUENCE [LARGE SCALE GENOMIC DNA]</scope>
    <source>
        <strain>ATCC 33223 / DSM 2355 / 39E</strain>
    </source>
</reference>
<dbReference type="EC" id="6.1.1.17" evidence="1"/>
<dbReference type="EMBL" id="CP000924">
    <property type="protein sequence ID" value="ABY94020.1"/>
    <property type="molecule type" value="Genomic_DNA"/>
</dbReference>
<dbReference type="SMR" id="B0KCH7"/>
<dbReference type="STRING" id="340099.Teth39_0351"/>
<dbReference type="KEGG" id="tpd:Teth39_0351"/>
<dbReference type="eggNOG" id="COG0008">
    <property type="taxonomic scope" value="Bacteria"/>
</dbReference>
<dbReference type="HOGENOM" id="CLU_015768_6_3_9"/>
<dbReference type="Proteomes" id="UP000002156">
    <property type="component" value="Chromosome"/>
</dbReference>
<dbReference type="GO" id="GO:0005829">
    <property type="term" value="C:cytosol"/>
    <property type="evidence" value="ECO:0007669"/>
    <property type="project" value="TreeGrafter"/>
</dbReference>
<dbReference type="GO" id="GO:0005524">
    <property type="term" value="F:ATP binding"/>
    <property type="evidence" value="ECO:0007669"/>
    <property type="project" value="UniProtKB-UniRule"/>
</dbReference>
<dbReference type="GO" id="GO:0004818">
    <property type="term" value="F:glutamate-tRNA ligase activity"/>
    <property type="evidence" value="ECO:0007669"/>
    <property type="project" value="UniProtKB-UniRule"/>
</dbReference>
<dbReference type="GO" id="GO:0000049">
    <property type="term" value="F:tRNA binding"/>
    <property type="evidence" value="ECO:0007669"/>
    <property type="project" value="InterPro"/>
</dbReference>
<dbReference type="GO" id="GO:0008270">
    <property type="term" value="F:zinc ion binding"/>
    <property type="evidence" value="ECO:0007669"/>
    <property type="project" value="InterPro"/>
</dbReference>
<dbReference type="GO" id="GO:0006424">
    <property type="term" value="P:glutamyl-tRNA aminoacylation"/>
    <property type="evidence" value="ECO:0007669"/>
    <property type="project" value="UniProtKB-UniRule"/>
</dbReference>
<dbReference type="CDD" id="cd00808">
    <property type="entry name" value="GluRS_core"/>
    <property type="match status" value="1"/>
</dbReference>
<dbReference type="FunFam" id="1.10.10.350:FF:000002">
    <property type="entry name" value="Glutamate--tRNA ligase"/>
    <property type="match status" value="1"/>
</dbReference>
<dbReference type="FunFam" id="3.40.50.620:FF:000045">
    <property type="entry name" value="Glutamate--tRNA ligase, mitochondrial"/>
    <property type="match status" value="1"/>
</dbReference>
<dbReference type="Gene3D" id="1.10.10.350">
    <property type="match status" value="1"/>
</dbReference>
<dbReference type="Gene3D" id="3.40.50.620">
    <property type="entry name" value="HUPs"/>
    <property type="match status" value="1"/>
</dbReference>
<dbReference type="HAMAP" id="MF_00022">
    <property type="entry name" value="Glu_tRNA_synth_type1"/>
    <property type="match status" value="1"/>
</dbReference>
<dbReference type="InterPro" id="IPR045462">
    <property type="entry name" value="aa-tRNA-synth_I_cd-bd"/>
</dbReference>
<dbReference type="InterPro" id="IPR020751">
    <property type="entry name" value="aa-tRNA-synth_I_codon-bd_sub2"/>
</dbReference>
<dbReference type="InterPro" id="IPR001412">
    <property type="entry name" value="aa-tRNA-synth_I_CS"/>
</dbReference>
<dbReference type="InterPro" id="IPR008925">
    <property type="entry name" value="aa_tRNA-synth_I_cd-bd_sf"/>
</dbReference>
<dbReference type="InterPro" id="IPR004527">
    <property type="entry name" value="Glu-tRNA-ligase_bac/mito"/>
</dbReference>
<dbReference type="InterPro" id="IPR000924">
    <property type="entry name" value="Glu/Gln-tRNA-synth"/>
</dbReference>
<dbReference type="InterPro" id="IPR020058">
    <property type="entry name" value="Glu/Gln-tRNA-synth_Ib_cat-dom"/>
</dbReference>
<dbReference type="InterPro" id="IPR049940">
    <property type="entry name" value="GluQ/Sye"/>
</dbReference>
<dbReference type="InterPro" id="IPR033910">
    <property type="entry name" value="GluRS_core"/>
</dbReference>
<dbReference type="InterPro" id="IPR014729">
    <property type="entry name" value="Rossmann-like_a/b/a_fold"/>
</dbReference>
<dbReference type="NCBIfam" id="TIGR00464">
    <property type="entry name" value="gltX_bact"/>
    <property type="match status" value="1"/>
</dbReference>
<dbReference type="PANTHER" id="PTHR43311">
    <property type="entry name" value="GLUTAMATE--TRNA LIGASE"/>
    <property type="match status" value="1"/>
</dbReference>
<dbReference type="PANTHER" id="PTHR43311:SF2">
    <property type="entry name" value="GLUTAMATE--TRNA LIGASE, MITOCHONDRIAL-RELATED"/>
    <property type="match status" value="1"/>
</dbReference>
<dbReference type="Pfam" id="PF19269">
    <property type="entry name" value="Anticodon_2"/>
    <property type="match status" value="1"/>
</dbReference>
<dbReference type="Pfam" id="PF00749">
    <property type="entry name" value="tRNA-synt_1c"/>
    <property type="match status" value="1"/>
</dbReference>
<dbReference type="PRINTS" id="PR00987">
    <property type="entry name" value="TRNASYNTHGLU"/>
</dbReference>
<dbReference type="SUPFAM" id="SSF48163">
    <property type="entry name" value="An anticodon-binding domain of class I aminoacyl-tRNA synthetases"/>
    <property type="match status" value="1"/>
</dbReference>
<dbReference type="SUPFAM" id="SSF52374">
    <property type="entry name" value="Nucleotidylyl transferase"/>
    <property type="match status" value="1"/>
</dbReference>
<dbReference type="PROSITE" id="PS00178">
    <property type="entry name" value="AA_TRNA_LIGASE_I"/>
    <property type="match status" value="1"/>
</dbReference>
<sequence length="485" mass="56418">MNNLRVRFAPSPTGAIHIGNIRTALFNYLFSRSEGATFVLRIEDTDLERSSKEFEELIFKELEWLGIEWDEGPDKPGPYGPYRQSERLEIYHKFAQKLIEEKKAYRCYCTPEELEEDRRKAVERGDIPCYSGRCRYLTKEQEEAFIREGRKPVIRFIIPDDEVIEFEDMIKGKITIKSDTLGGDMVIVKSDGMPTYNFAVVIDDALMKITHVIRGEDHIYNTPKQILIYKALGFEIPKFAHAPLILGPDRTKLSKRHGNTYIGQYRELGYLPEAMFNFLSLLSWSPEDNVEIMSKEEIIKKFNFRRIHSANPVFDIEKLNWMNQQYIQKSSIERIVDLAIPHLRRAGYIDGIDDMVYNWLKDVISLYKDGLQYVAQITEKAKMFFVEEVEYSDETVKILNSPNSKIVLEVVKKVIEEADEITEEYVKDLLKKLQKETKVKGKEFFMPIRVAITGEDHGPELVKIIPLLGKDKVINRLKKAINLIK</sequence>
<evidence type="ECO:0000255" key="1">
    <source>
        <dbReference type="HAMAP-Rule" id="MF_00022"/>
    </source>
</evidence>
<comment type="function">
    <text evidence="1">Catalyzes the attachment of glutamate to tRNA(Glu) in a two-step reaction: glutamate is first activated by ATP to form Glu-AMP and then transferred to the acceptor end of tRNA(Glu).</text>
</comment>
<comment type="catalytic activity">
    <reaction evidence="1">
        <text>tRNA(Glu) + L-glutamate + ATP = L-glutamyl-tRNA(Glu) + AMP + diphosphate</text>
        <dbReference type="Rhea" id="RHEA:23540"/>
        <dbReference type="Rhea" id="RHEA-COMP:9663"/>
        <dbReference type="Rhea" id="RHEA-COMP:9680"/>
        <dbReference type="ChEBI" id="CHEBI:29985"/>
        <dbReference type="ChEBI" id="CHEBI:30616"/>
        <dbReference type="ChEBI" id="CHEBI:33019"/>
        <dbReference type="ChEBI" id="CHEBI:78442"/>
        <dbReference type="ChEBI" id="CHEBI:78520"/>
        <dbReference type="ChEBI" id="CHEBI:456215"/>
        <dbReference type="EC" id="6.1.1.17"/>
    </reaction>
</comment>
<comment type="subunit">
    <text evidence="1">Monomer.</text>
</comment>
<comment type="subcellular location">
    <subcellularLocation>
        <location evidence="1">Cytoplasm</location>
    </subcellularLocation>
</comment>
<comment type="similarity">
    <text evidence="1">Belongs to the class-I aminoacyl-tRNA synthetase family. Glutamate--tRNA ligase type 1 subfamily.</text>
</comment>
<feature type="chain" id="PRO_0000367781" description="Glutamate--tRNA ligase 1">
    <location>
        <begin position="1"/>
        <end position="485"/>
    </location>
</feature>
<feature type="short sequence motif" description="'HIGH' region" evidence="1">
    <location>
        <begin position="10"/>
        <end position="20"/>
    </location>
</feature>
<feature type="short sequence motif" description="'KMSKS' region" evidence="1">
    <location>
        <begin position="252"/>
        <end position="256"/>
    </location>
</feature>
<feature type="binding site" evidence="1">
    <location>
        <position position="255"/>
    </location>
    <ligand>
        <name>ATP</name>
        <dbReference type="ChEBI" id="CHEBI:30616"/>
    </ligand>
</feature>
<proteinExistence type="inferred from homology"/>
<keyword id="KW-0030">Aminoacyl-tRNA synthetase</keyword>
<keyword id="KW-0067">ATP-binding</keyword>
<keyword id="KW-0963">Cytoplasm</keyword>
<keyword id="KW-0436">Ligase</keyword>
<keyword id="KW-0547">Nucleotide-binding</keyword>
<keyword id="KW-0648">Protein biosynthesis</keyword>
<keyword id="KW-1185">Reference proteome</keyword>
<gene>
    <name evidence="1" type="primary">gltX1</name>
    <name type="ordered locus">Teth39_0351</name>
</gene>
<name>SYE1_THEP3</name>
<organism>
    <name type="scientific">Thermoanaerobacter pseudethanolicus (strain ATCC 33223 / 39E)</name>
    <name type="common">Clostridium thermohydrosulfuricum</name>
    <dbReference type="NCBI Taxonomy" id="340099"/>
    <lineage>
        <taxon>Bacteria</taxon>
        <taxon>Bacillati</taxon>
        <taxon>Bacillota</taxon>
        <taxon>Clostridia</taxon>
        <taxon>Thermoanaerobacterales</taxon>
        <taxon>Thermoanaerobacteraceae</taxon>
        <taxon>Thermoanaerobacter</taxon>
    </lineage>
</organism>
<accession>B0KCH7</accession>
<protein>
    <recommendedName>
        <fullName evidence="1">Glutamate--tRNA ligase 1</fullName>
        <ecNumber evidence="1">6.1.1.17</ecNumber>
    </recommendedName>
    <alternativeName>
        <fullName evidence="1">Glutamyl-tRNA synthetase 1</fullName>
        <shortName evidence="1">GluRS 1</shortName>
    </alternativeName>
</protein>